<proteinExistence type="inferred from homology"/>
<comment type="function">
    <molecule>Glycoprotein N</molecule>
    <text evidence="2 4">Forms homotetramers with glycoprotein C at the surface of the virion (By similarity). Attaches the virion to host cell receptors including integrin ITGAV/ITGB3 (By similarity). This attachment induces virion internalization predominantly through clathrin-dependent endocytosis (By similarity). Mediates the assembly and budding of infectious virus particles through its interaction with the nucleocapsid protein and the viral genome (By similarity). May dysregulate normal immune and endothelial cell responses through an ITAM motif (By similarity). Translocates to mitochondria, binds to host TUFM and recruits MAP1LC3B (By similarity). These interactions induce mitochondrial autophagy and therefore destruction of host MAVS leading to inhibition of type I interferon (IFN) responses (By similarity). Concomitant breakdown of glycoprotein N is apparently prevented by the nucleoprotein that may inhibit Gn-stimulated autophagosome-lysosome fusion (By similarity). Interacts with the viral genomic RNA (By similarity).</text>
</comment>
<comment type="function">
    <molecule>Glycoprotein C</molecule>
    <text evidence="2">Forms homotetramers with glycoprotein N at the surface of the virion. Attaches the virion to host cell receptors including integrin ITGAV/ITGB3. This attachment induces virion internalization predominantly through clathrin-dependent endocytosis. Class II fusion protein that promotes fusion of viral membrane with host endosomal membrane after endocytosis of the virion.</text>
</comment>
<comment type="subunit">
    <molecule>Glycoprotein N</molecule>
    <text evidence="2 3">Homodimer (By similarity). Homotetramer; forms heterotetrameric Gn-Gc spikes in the pre-fusion conformation (By similarity). Interacts (via C-terminus) with the nucleoprotein (By similarity). Interacts with host TUFM; this interaction contributes to the virus-induced degradation of mitochondria by autophagy, which leads to degradation of host MAVS and inhibition of type I interferon (IFN) responses (By similarity). Interacts with host MAP1LC3B; this interaction contributes to the virus-induced degradation of mitochondria by autophagy, which leads to degradation of host MAVS and inhibition of type I interferon (IFN) responses (By similarity).</text>
</comment>
<comment type="subunit">
    <molecule>Glycoprotein C</molecule>
    <text evidence="2 4 5">Homodimer. Homotetramer; forms heterotetrameric Gn-Gc spikes in the pre-fusion conformation (By similarity). Homotrimer; forms homotrimer in the post-fusion conformation at acidic pH (By similarity). Interacts (via C-terminus) with the nucleoprotein (By similarity).</text>
</comment>
<comment type="subcellular location">
    <molecule>Glycoprotein N</molecule>
    <subcellularLocation>
        <location evidence="2">Virion membrane</location>
        <topology evidence="9">Multi-pass membrane protein</topology>
    </subcellularLocation>
    <subcellularLocation>
        <location evidence="2">Host cell surface</location>
    </subcellularLocation>
    <subcellularLocation>
        <location evidence="2">Host Golgi apparatus membrane</location>
        <topology evidence="2">Multi-pass membrane protein</topology>
    </subcellularLocation>
    <subcellularLocation>
        <location evidence="2">Host endoplasmic reticulum membrane</location>
        <topology evidence="2">Multi-pass membrane protein</topology>
    </subcellularLocation>
    <subcellularLocation>
        <location evidence="2">Host mitochondrion</location>
    </subcellularLocation>
    <text evidence="4">Interaction between glycoprotein N and glycoprotein C is essential for proper targeting of glycoprotein N to the host Golgi complex, where virion budding occurs.</text>
</comment>
<comment type="subcellular location">
    <molecule>Glycoprotein C</molecule>
    <subcellularLocation>
        <location evidence="2">Virion membrane</location>
        <topology evidence="9">Single-pass type I membrane protein</topology>
    </subcellularLocation>
    <subcellularLocation>
        <location evidence="2">Host cell surface</location>
    </subcellularLocation>
    <subcellularLocation>
        <location evidence="2">Host Golgi apparatus membrane</location>
        <topology evidence="2">Single-pass type I membrane protein</topology>
    </subcellularLocation>
    <subcellularLocation>
        <location evidence="2">Host endoplasmic reticulum membrane</location>
        <topology evidence="2">Single-pass type I membrane protein</topology>
    </subcellularLocation>
    <text evidence="2 9">Budding probably takes place at the host Golgi (Probable). Glycoprotein C cytoplasmic tail is important for efficient Golgi localization (By similarity).</text>
</comment>
<comment type="domain">
    <molecule>Glycoprotein N</molecule>
    <text evidence="2 3 4 6">The YxxL motif at the C-terminus is indispensable for the interaction with MAP1LC3B and for the Gn-mediated induction of mitochondrial autophagy (By similarity). The cytoplasmic tail is involved in the inhibition of the host innate immune response (By similarity). The C-terminus of the cytoplasmic tail is involved in binding to the viral genome and the nucleocapsid (By similarity). Contains 2 contiguous zinc-fingers (By similarity).</text>
</comment>
<comment type="domain">
    <molecule>Glycoprotein C</molecule>
    <text evidence="4">The C-terminus is necessary for proper localization in the Golgi (By similarity). The cytoplasmic tail is involved in binding to the nucleocapsid (By similarity).</text>
</comment>
<comment type="PTM">
    <molecule>Envelopment polyprotein</molecule>
    <text evidence="2">Envelope polyprotein precursor is quickly cleaved in vivo just after synthesis, presumably by host signal peptidase.</text>
</comment>
<comment type="similarity">
    <text evidence="9">Belongs to the hantavirus envelope glycoprotein family.</text>
</comment>
<comment type="caution">
    <text evidence="10">The sequence was wrongly described as Hallnas B1 strain.</text>
</comment>
<sequence>MGELSPVCLYLLLQGLLLCNTGAARNLNELKMECPHTIRLGQGLVVGSVELPSLPIQQVETLKLESSCNFDLHTSTAGQQSFTKWTWEIKGDLAENTQASSTSFQTKSSEVNLRGLCLIPTLVVETAARMRKTIACYDLSCNQTVCQPTVYLMGPIQTCITTKSCLLSLGDQRIQVNYEKTYCVSGDLVEGICFNPIHTMALSQPSHTYDIMTMMVRCFLVIKKVTSGDSMKIEKNFETLVQKNGCTANNFQGYYICLIGSSSEPLYVPALDDYRSAEVLSRMAFAPHGEDHDIEKNAVSAMRIAGKVTGKVPSTESSDTVQGIAFSGSPLYTSTGVLTSKDDPVYIWAPGIIMEGNHSICEKKTLPLTWTGFISLPGEIEKTTQCTVFCTLAGPGADCEAYSETGIFNISSPTCLINRVQRFRGSEQQIKFVCQRVDMDITVYCNGMKKVILTKTLVIGQCIYTFTSIFSLIPGVAHSLAVELCVPGLHGWATMLLLLTFCFGWVLIPTITMILLKILIAFAYLCSKYNTDSKFRILIEKVKREYQKTMGSMVCEVCQYECETAKELESHRKSCSIGSCPYCLNPSEATTSALQAHFKVCKLRSRFQENLRKSLTVYEPMQGCYRTLSLFRYRSRFFVGLVWCVLLVHHLIVWAASAETQNLNAGWTDTAHGSRIIPMKTDLELDFSLQSSASYTYRRQLQNPANEQEKIPFHLQLSKQVIHAEIQHLGHWMDATFNLKTAFHCYGSCEKYAYPWQTAGCFIEKDYEYETGWGCNPPDCPGVGTGCTACGVYLDKLKSVGKVFKIVSLRYTRKVCIQLGTEQTCKTVDSNDCLITTSVKVCLIGTISKFQPSDTLLFLGPLQQGGLIFKQWCTTTCQFGDPGDIMSTPTGMKCPELNGSFRKKCAFATTPVCQFDGNTISGYKRMIATKDSFQSFNVTEPHISTSALEWIDPDSSLRDHINVIVSRDLSFQDLSETPCQIDLATASIDGAWGSGVGFNLVCTVSLTECSAFLTSIKACDAAMCYGSTTANLVRGQNTIHIVGKGGHSGSKFMCCHDTKCSSTGLVAAAPHLDRVTPYNQADSDKIFDDGAPECGMSCWFKKSGEWILGVLNGNWMVVAVLVVLLILSILLFTLCCPRRPSYRKEHKP</sequence>
<reference key="1">
    <citation type="journal article" date="1989" name="Virology">
        <title>Determination of the coding capacity of the M genome segment of nephropathia epidemica virus strain Hallnas B1 by molecular cloning and nucleotide sequence analysis.</title>
        <authorList>
            <person name="Giebel L.B."/>
            <person name="Stohwasser R."/>
            <person name="Zoeller L."/>
            <person name="Bautz E.K.F."/>
            <person name="Darai G."/>
        </authorList>
    </citation>
    <scope>NUCLEOTIDE SEQUENCE [GENOMIC RNA]</scope>
</reference>
<reference key="2">
    <citation type="journal article" date="1992" name="Virus Res.">
        <title>Comparison of the deduced gene products of the L, M and S genome segments of hantaviruses.</title>
        <authorList>
            <person name="Antic D."/>
            <person name="Kang C.Y."/>
            <person name="Spik K."/>
            <person name="Schmaljohn C.S."/>
            <person name="Vapalahti O."/>
            <person name="Vaheri A."/>
        </authorList>
    </citation>
    <scope>SEQUENCE REVISION TO 802-803</scope>
</reference>
<reference key="3">
    <citation type="journal article" date="2014" name="Viruses">
        <title>Hantavirus Gn and Gc envelope glycoproteins: key structural units for virus cell entry and virus assembly.</title>
        <authorList>
            <person name="Cifuentes-Munoz N."/>
            <person name="Salazar-Quiroz N."/>
            <person name="Tischler N.D."/>
        </authorList>
    </citation>
    <scope>REVIEW</scope>
</reference>
<keyword id="KW-1015">Disulfide bond</keyword>
<keyword id="KW-1170">Fusion of virus membrane with host endosomal membrane</keyword>
<keyword id="KW-1168">Fusion of virus membrane with host membrane</keyword>
<keyword id="KW-0325">Glycoprotein</keyword>
<keyword id="KW-1038">Host endoplasmic reticulum</keyword>
<keyword id="KW-1040">Host Golgi apparatus</keyword>
<keyword id="KW-1043">Host membrane</keyword>
<keyword id="KW-1045">Host mitochondrion</keyword>
<keyword id="KW-0945">Host-virus interaction</keyword>
<keyword id="KW-1090">Inhibition of host innate immune response by virus</keyword>
<keyword id="KW-1113">Inhibition of host RLR pathway by virus</keyword>
<keyword id="KW-1110">Inhibition of host TRAFs by virus</keyword>
<keyword id="KW-0472">Membrane</keyword>
<keyword id="KW-0479">Metal-binding</keyword>
<keyword id="KW-0597">Phosphoprotein</keyword>
<keyword id="KW-0677">Repeat</keyword>
<keyword id="KW-0732">Signal</keyword>
<keyword id="KW-0812">Transmembrane</keyword>
<keyword id="KW-1133">Transmembrane helix</keyword>
<keyword id="KW-1161">Viral attachment to host cell</keyword>
<keyword id="KW-0899">Viral immunoevasion</keyword>
<keyword id="KW-1162">Viral penetration into host cytoplasm</keyword>
<keyword id="KW-0946">Virion</keyword>
<keyword id="KW-1160">Virus entry into host cell</keyword>
<keyword id="KW-0862">Zinc</keyword>
<keyword id="KW-0863">Zinc-finger</keyword>
<name>GP_PUUMG</name>
<organismHost>
    <name type="scientific">Homo sapiens</name>
    <name type="common">Human</name>
    <dbReference type="NCBI Taxonomy" id="9606"/>
</organismHost>
<organismHost>
    <name type="scientific">Myodes glareolus</name>
    <name type="common">Bank vole</name>
    <name type="synonym">Clethrionomys glareolus</name>
    <dbReference type="NCBI Taxonomy" id="447135"/>
</organismHost>
<gene>
    <name type="primary">GP</name>
</gene>
<organism>
    <name type="scientific">Puumala virus (strain Bank vole/Russia/CG1820/1984)</name>
    <dbReference type="NCBI Taxonomy" id="1337063"/>
    <lineage>
        <taxon>Viruses</taxon>
        <taxon>Riboviria</taxon>
        <taxon>Orthornavirae</taxon>
        <taxon>Negarnaviricota</taxon>
        <taxon>Polyploviricotina</taxon>
        <taxon>Ellioviricetes</taxon>
        <taxon>Bunyavirales</taxon>
        <taxon>Hantaviridae</taxon>
        <taxon>Mammantavirinae</taxon>
        <taxon>Orthohantavirus</taxon>
        <taxon>Orthohantavirus puumalaense</taxon>
    </lineage>
</organism>
<feature type="signal peptide" evidence="7">
    <location>
        <begin position="1"/>
        <end position="23"/>
    </location>
</feature>
<feature type="chain" id="PRO_0000036822" description="Envelopment polyprotein">
    <location>
        <begin position="24"/>
        <end position="1148"/>
    </location>
</feature>
<feature type="chain" id="PRO_0000036823" description="Glycoprotein N" evidence="1">
    <location>
        <begin position="24"/>
        <end position="658"/>
    </location>
</feature>
<feature type="chain" id="PRO_0000036824" description="Glycoprotein C" evidence="1">
    <location>
        <begin position="659"/>
        <end position="1148"/>
    </location>
</feature>
<feature type="topological domain" description="Lumenal" evidence="7">
    <location>
        <begin position="24"/>
        <end position="495"/>
    </location>
</feature>
<feature type="transmembrane region" description="Helical" evidence="7">
    <location>
        <begin position="496"/>
        <end position="516"/>
    </location>
</feature>
<feature type="topological domain" description="Cytoplasmic" evidence="7">
    <location>
        <begin position="517"/>
        <end position="637"/>
    </location>
</feature>
<feature type="transmembrane region" description="Helical" evidence="7">
    <location>
        <begin position="638"/>
        <end position="658"/>
    </location>
</feature>
<feature type="topological domain" description="Lumenal" evidence="7">
    <location>
        <begin position="659"/>
        <end position="1114"/>
    </location>
</feature>
<feature type="transmembrane region" description="Helical" evidence="7">
    <location>
        <begin position="1115"/>
        <end position="1135"/>
    </location>
</feature>
<feature type="topological domain" description="Cytoplasmic" evidence="7">
    <location>
        <begin position="1136"/>
        <end position="1148"/>
    </location>
</feature>
<feature type="domain" description="ITAM" evidence="8">
    <location>
        <begin position="621"/>
        <end position="644"/>
    </location>
</feature>
<feature type="zinc finger region" description="CCHC-type 1" evidence="6">
    <location>
        <begin position="555"/>
        <end position="575"/>
    </location>
</feature>
<feature type="zinc finger region" description="CCHC-type 2" evidence="6">
    <location>
        <begin position="580"/>
        <end position="601"/>
    </location>
</feature>
<feature type="region of interest" description="Binding to the ribonucleoprotein" evidence="6">
    <location>
        <begin position="526"/>
        <end position="543"/>
    </location>
</feature>
<feature type="region of interest" description="Binding to the ribonucleoprotein" evidence="4">
    <location>
        <begin position="598"/>
        <end position="615"/>
    </location>
</feature>
<feature type="region of interest" description="Binding to the ribonucleoprotein" evidence="6">
    <location>
        <begin position="602"/>
        <end position="613"/>
    </location>
</feature>
<feature type="region of interest" description="Binding to the ribonucleoprotein" evidence="4">
    <location>
        <begin position="621"/>
        <end position="635"/>
    </location>
</feature>
<feature type="region of interest" description="Fusion loop" evidence="5">
    <location>
        <begin position="767"/>
        <end position="787"/>
    </location>
</feature>
<feature type="region of interest" description="Binding to the ribonucleoprotein" evidence="4">
    <location>
        <begin position="1131"/>
        <end position="1148"/>
    </location>
</feature>
<feature type="region of interest" description="Binding to the ribonucleoprotein" evidence="4">
    <location>
        <begin position="1131"/>
        <end position="1143"/>
    </location>
</feature>
<feature type="short sequence motif" description="YxxL" evidence="2">
    <location>
        <begin position="625"/>
        <end position="628"/>
    </location>
</feature>
<feature type="site" description="Cleavage; by host signal peptidase" evidence="2">
    <location>
        <begin position="658"/>
        <end position="659"/>
    </location>
</feature>
<feature type="glycosylation site" description="N-linked (GlcNAc...) asparagine; by host" evidence="7">
    <location>
        <position position="142"/>
    </location>
</feature>
<feature type="glycosylation site" description="N-linked (GlcNAc...) asparagine; by host" evidence="7">
    <location>
        <position position="357"/>
    </location>
</feature>
<feature type="glycosylation site" description="N-linked (GlcNAc...) asparagine; by host" evidence="7">
    <location>
        <position position="409"/>
    </location>
</feature>
<feature type="glycosylation site" description="N-linked (GlcNAc...) asparagine; by host" evidence="5">
    <location>
        <position position="937"/>
    </location>
</feature>
<feature type="disulfide bond" evidence="6">
    <location>
        <begin position="34"/>
        <end position="159"/>
    </location>
</feature>
<feature type="disulfide bond" evidence="6">
    <location>
        <begin position="68"/>
        <end position="165"/>
    </location>
</feature>
<feature type="disulfide bond" evidence="6">
    <location>
        <begin position="117"/>
        <end position="136"/>
    </location>
</feature>
<feature type="disulfide bond" evidence="6">
    <location>
        <begin position="141"/>
        <end position="146"/>
    </location>
</feature>
<feature type="disulfide bond" evidence="6">
    <location>
        <begin position="183"/>
        <end position="193"/>
    </location>
</feature>
<feature type="disulfide bond" evidence="6">
    <location>
        <begin position="218"/>
        <end position="257"/>
    </location>
</feature>
<feature type="disulfide bond" evidence="6">
    <location>
        <begin position="386"/>
        <end position="445"/>
    </location>
</feature>
<feature type="disulfide bond" evidence="6">
    <location>
        <begin position="390"/>
        <end position="399"/>
    </location>
</feature>
<feature type="disulfide bond" evidence="6">
    <location>
        <begin position="415"/>
        <end position="434"/>
    </location>
</feature>
<feature type="disulfide bond" evidence="6">
    <location>
        <begin position="462"/>
        <end position="485"/>
    </location>
</feature>
<feature type="disulfide bond" evidence="2">
    <location>
        <begin position="745"/>
        <end position="780"/>
    </location>
</feature>
<feature type="disulfide bond" evidence="2">
    <location>
        <begin position="749"/>
        <end position="787"/>
    </location>
</feature>
<feature type="disulfide bond" evidence="2">
    <location>
        <begin position="761"/>
        <end position="894"/>
    </location>
</feature>
<feature type="disulfide bond" evidence="2">
    <location>
        <begin position="775"/>
        <end position="905"/>
    </location>
</feature>
<feature type="disulfide bond" evidence="2">
    <location>
        <begin position="790"/>
        <end position="913"/>
    </location>
</feature>
<feature type="disulfide bond" evidence="2">
    <location>
        <begin position="816"/>
        <end position="825"/>
    </location>
</feature>
<feature type="disulfide bond" evidence="2">
    <location>
        <begin position="833"/>
        <end position="842"/>
    </location>
</feature>
<feature type="disulfide bond" evidence="2">
    <location>
        <begin position="873"/>
        <end position="877"/>
    </location>
</feature>
<feature type="disulfide bond" evidence="2">
    <location>
        <begin position="979"/>
        <end position="1009"/>
    </location>
</feature>
<feature type="disulfide bond" evidence="2">
    <location>
        <begin position="1002"/>
        <end position="1054"/>
    </location>
</feature>
<feature type="disulfide bond" evidence="2">
    <location>
        <begin position="1019"/>
        <end position="1024"/>
    </location>
</feature>
<feature type="disulfide bond" evidence="2">
    <location>
        <begin position="1055"/>
        <end position="1060"/>
    </location>
</feature>
<feature type="disulfide bond" evidence="6">
    <location>
        <begin position="1094"/>
        <end position="1098"/>
    </location>
</feature>
<dbReference type="EMBL" id="M29979">
    <property type="status" value="NOT_ANNOTATED_CDS"/>
    <property type="molecule type" value="Genomic_RNA"/>
</dbReference>
<dbReference type="PIR" id="A33077">
    <property type="entry name" value="GNVUNE"/>
</dbReference>
<dbReference type="SMR" id="P21400"/>
<dbReference type="GlyCosmos" id="P21400">
    <property type="glycosylation" value="4 sites, No reported glycans"/>
</dbReference>
<dbReference type="Proteomes" id="UP000008481">
    <property type="component" value="Genome"/>
</dbReference>
<dbReference type="GO" id="GO:0044167">
    <property type="term" value="C:host cell endoplasmic reticulum membrane"/>
    <property type="evidence" value="ECO:0007669"/>
    <property type="project" value="UniProtKB-SubCell"/>
</dbReference>
<dbReference type="GO" id="GO:0044178">
    <property type="term" value="C:host cell Golgi membrane"/>
    <property type="evidence" value="ECO:0007669"/>
    <property type="project" value="UniProtKB-SubCell"/>
</dbReference>
<dbReference type="GO" id="GO:0033650">
    <property type="term" value="C:host cell mitochondrion"/>
    <property type="evidence" value="ECO:0007669"/>
    <property type="project" value="UniProtKB-SubCell"/>
</dbReference>
<dbReference type="GO" id="GO:0044228">
    <property type="term" value="C:host cell surface"/>
    <property type="evidence" value="ECO:0007669"/>
    <property type="project" value="UniProtKB-SubCell"/>
</dbReference>
<dbReference type="GO" id="GO:0016020">
    <property type="term" value="C:membrane"/>
    <property type="evidence" value="ECO:0007669"/>
    <property type="project" value="UniProtKB-KW"/>
</dbReference>
<dbReference type="GO" id="GO:0055036">
    <property type="term" value="C:virion membrane"/>
    <property type="evidence" value="ECO:0007669"/>
    <property type="project" value="UniProtKB-SubCell"/>
</dbReference>
<dbReference type="GO" id="GO:0008270">
    <property type="term" value="F:zinc ion binding"/>
    <property type="evidence" value="ECO:0007669"/>
    <property type="project" value="UniProtKB-KW"/>
</dbReference>
<dbReference type="GO" id="GO:0039654">
    <property type="term" value="P:fusion of virus membrane with host endosome membrane"/>
    <property type="evidence" value="ECO:0007669"/>
    <property type="project" value="UniProtKB-KW"/>
</dbReference>
<dbReference type="GO" id="GO:0007165">
    <property type="term" value="P:signal transduction"/>
    <property type="evidence" value="ECO:0007669"/>
    <property type="project" value="InterPro"/>
</dbReference>
<dbReference type="GO" id="GO:0046718">
    <property type="term" value="P:symbiont entry into host cell"/>
    <property type="evidence" value="ECO:0007669"/>
    <property type="project" value="UniProtKB-KW"/>
</dbReference>
<dbReference type="GO" id="GO:0052170">
    <property type="term" value="P:symbiont-mediated suppression of host innate immune response"/>
    <property type="evidence" value="ECO:0007669"/>
    <property type="project" value="UniProtKB-KW"/>
</dbReference>
<dbReference type="GO" id="GO:0039527">
    <property type="term" value="P:symbiont-mediated suppression of host TRAF-mediated signal transduction"/>
    <property type="evidence" value="ECO:0007669"/>
    <property type="project" value="UniProtKB-KW"/>
</dbReference>
<dbReference type="GO" id="GO:0019062">
    <property type="term" value="P:virion attachment to host cell"/>
    <property type="evidence" value="ECO:0007669"/>
    <property type="project" value="UniProtKB-KW"/>
</dbReference>
<dbReference type="Gene3D" id="1.10.8.1320">
    <property type="match status" value="1"/>
</dbReference>
<dbReference type="InterPro" id="IPR016402">
    <property type="entry name" value="Envelope_glycoprot_Hantavirus"/>
</dbReference>
<dbReference type="InterPro" id="IPR048791">
    <property type="entry name" value="Gc_C_bunya"/>
</dbReference>
<dbReference type="InterPro" id="IPR048790">
    <property type="entry name" value="Gn-B_hanta"/>
</dbReference>
<dbReference type="InterPro" id="IPR002532">
    <property type="entry name" value="Hanta_Gc_N"/>
</dbReference>
<dbReference type="InterPro" id="IPR002534">
    <property type="entry name" value="Hanta_Gn-H"/>
</dbReference>
<dbReference type="InterPro" id="IPR012316">
    <property type="entry name" value="ITAM_motif_hantavir-typ"/>
</dbReference>
<dbReference type="Pfam" id="PF20682">
    <property type="entry name" value="Hanta_Gc_C"/>
    <property type="match status" value="1"/>
</dbReference>
<dbReference type="Pfam" id="PF01561">
    <property type="entry name" value="Hanta_Gc_N"/>
    <property type="match status" value="1"/>
</dbReference>
<dbReference type="Pfam" id="PF20679">
    <property type="entry name" value="Hanta_Gn-B"/>
    <property type="match status" value="1"/>
</dbReference>
<dbReference type="Pfam" id="PF01567">
    <property type="entry name" value="Hanta_Gn-H"/>
    <property type="match status" value="1"/>
</dbReference>
<dbReference type="Pfam" id="PF10538">
    <property type="entry name" value="ITAM_Cys-rich"/>
    <property type="match status" value="1"/>
</dbReference>
<dbReference type="PIRSF" id="PIRSF003945">
    <property type="entry name" value="M_poly_HantaV"/>
    <property type="match status" value="1"/>
</dbReference>
<dbReference type="PROSITE" id="PS51056">
    <property type="entry name" value="ITAM_2"/>
    <property type="match status" value="1"/>
</dbReference>
<evidence type="ECO:0000250" key="1"/>
<evidence type="ECO:0000250" key="2">
    <source>
        <dbReference type="UniProtKB" id="P08668"/>
    </source>
</evidence>
<evidence type="ECO:0000250" key="3">
    <source>
        <dbReference type="UniProtKB" id="P0DTJ1"/>
    </source>
</evidence>
<evidence type="ECO:0000250" key="4">
    <source>
        <dbReference type="UniProtKB" id="P27312"/>
    </source>
</evidence>
<evidence type="ECO:0000250" key="5">
    <source>
        <dbReference type="UniProtKB" id="P41266"/>
    </source>
</evidence>
<evidence type="ECO:0000250" key="6">
    <source>
        <dbReference type="UniProtKB" id="Q9E006"/>
    </source>
</evidence>
<evidence type="ECO:0000255" key="7"/>
<evidence type="ECO:0000255" key="8">
    <source>
        <dbReference type="PROSITE-ProRule" id="PRU00379"/>
    </source>
</evidence>
<evidence type="ECO:0000305" key="9"/>
<evidence type="ECO:0000305" key="10">
    <source>
    </source>
</evidence>
<protein>
    <recommendedName>
        <fullName>Envelopment polyprotein</fullName>
    </recommendedName>
    <alternativeName>
        <fullName>M polyprotein</fullName>
    </alternativeName>
    <component>
        <recommendedName>
            <fullName evidence="2">Glycoprotein N</fullName>
            <shortName>Gn</shortName>
        </recommendedName>
        <alternativeName>
            <fullName>Glycoprotein G1</fullName>
        </alternativeName>
    </component>
    <component>
        <recommendedName>
            <fullName evidence="2">Glycoprotein C</fullName>
            <shortName>Gc</shortName>
        </recommendedName>
        <alternativeName>
            <fullName>Glycoprotein G2</fullName>
        </alternativeName>
    </component>
</protein>
<accession>P21400</accession>